<comment type="function">
    <text evidence="2">The S-layer is a paracrystalline mono-layered assembly of proteins which coat the surface of bacteria.</text>
</comment>
<comment type="subcellular location">
    <subcellularLocation>
        <location>Secreted</location>
        <location>Cell wall</location>
        <location>S-layer</location>
    </subcellularLocation>
</comment>
<name>SLAP1_BACHU</name>
<evidence type="ECO:0000303" key="1">
    <source>
    </source>
</evidence>
<evidence type="ECO:0000305" key="2"/>
<dbReference type="SMR" id="P85122"/>
<dbReference type="GO" id="GO:0005576">
    <property type="term" value="C:extracellular region"/>
    <property type="evidence" value="ECO:0007669"/>
    <property type="project" value="UniProtKB-KW"/>
</dbReference>
<dbReference type="GO" id="GO:0030115">
    <property type="term" value="C:S-layer"/>
    <property type="evidence" value="ECO:0007669"/>
    <property type="project" value="UniProtKB-SubCell"/>
</dbReference>
<dbReference type="GO" id="GO:0031160">
    <property type="term" value="C:spore wall"/>
    <property type="evidence" value="ECO:0000314"/>
    <property type="project" value="UniProtKB"/>
</dbReference>
<keyword id="KW-0134">Cell wall</keyword>
<keyword id="KW-0903">Direct protein sequencing</keyword>
<keyword id="KW-0677">Repeat</keyword>
<keyword id="KW-0701">S-layer</keyword>
<keyword id="KW-0964">Secreted</keyword>
<protein>
    <recommendedName>
        <fullName>S-layer protein 1</fullName>
    </recommendedName>
    <alternativeName>
        <fullName>102 KDa parasporal endotoxin</fullName>
    </alternativeName>
</protein>
<accession>P85122</accession>
<reference evidence="2" key="1">
    <citation type="journal article" date="2006" name="Proteomics">
        <title>Mass spectrometric sequencing of endotoxin proteins of Bacillus thuringiensis ssp. konkukian extracted from polyacrylamide gels.</title>
        <authorList>
            <person name="Lee K.Y."/>
            <person name="Kang E.Y."/>
            <person name="Park S."/>
            <person name="Ahn S.K."/>
            <person name="Yoo K.H."/>
            <person name="Kim J.Y."/>
            <person name="Lee H.H."/>
        </authorList>
    </citation>
    <scope>PROTEIN SEQUENCE</scope>
</reference>
<feature type="chain" id="PRO_0000284768" description="S-layer protein 1">
    <location>
        <begin position="1" status="less than"/>
        <end position="43" status="greater than"/>
    </location>
</feature>
<feature type="non-consecutive residues" evidence="1">
    <location>
        <begin position="13"/>
        <end position="14"/>
    </location>
</feature>
<feature type="non-consecutive residues" evidence="1">
    <location>
        <begin position="25"/>
        <end position="26"/>
    </location>
</feature>
<feature type="non-terminal residue" evidence="1">
    <location>
        <position position="1"/>
    </location>
</feature>
<feature type="non-terminal residue" evidence="1">
    <location>
        <position position="43"/>
    </location>
</feature>
<proteinExistence type="evidence at protein level"/>
<sequence length="43" mass="4337">SATVELYSNLAAKGLAVEFTSTSLKAALLNILSVDGVPATTAK</sequence>
<organism>
    <name type="scientific">Bacillus thuringiensis subsp. konkukian</name>
    <dbReference type="NCBI Taxonomy" id="180856"/>
    <lineage>
        <taxon>Bacteria</taxon>
        <taxon>Bacillati</taxon>
        <taxon>Bacillota</taxon>
        <taxon>Bacilli</taxon>
        <taxon>Bacillales</taxon>
        <taxon>Bacillaceae</taxon>
        <taxon>Bacillus</taxon>
        <taxon>Bacillus cereus group</taxon>
    </lineage>
</organism>